<organism>
    <name type="scientific">Salmonella paratyphi C (strain RKS4594)</name>
    <dbReference type="NCBI Taxonomy" id="476213"/>
    <lineage>
        <taxon>Bacteria</taxon>
        <taxon>Pseudomonadati</taxon>
        <taxon>Pseudomonadota</taxon>
        <taxon>Gammaproteobacteria</taxon>
        <taxon>Enterobacterales</taxon>
        <taxon>Enterobacteriaceae</taxon>
        <taxon>Salmonella</taxon>
    </lineage>
</organism>
<evidence type="ECO:0000255" key="1">
    <source>
        <dbReference type="HAMAP-Rule" id="MF_00110"/>
    </source>
</evidence>
<proteinExistence type="inferred from homology"/>
<accession>C0Q0G1</accession>
<reference key="1">
    <citation type="journal article" date="2009" name="PLoS ONE">
        <title>Salmonella paratyphi C: genetic divergence from Salmonella choleraesuis and pathogenic convergence with Salmonella typhi.</title>
        <authorList>
            <person name="Liu W.-Q."/>
            <person name="Feng Y."/>
            <person name="Wang Y."/>
            <person name="Zou Q.-H."/>
            <person name="Chen F."/>
            <person name="Guo J.-T."/>
            <person name="Peng Y.-H."/>
            <person name="Jin Y."/>
            <person name="Li Y.-G."/>
            <person name="Hu S.-N."/>
            <person name="Johnston R.N."/>
            <person name="Liu G.-R."/>
            <person name="Liu S.-L."/>
        </authorList>
    </citation>
    <scope>NUCLEOTIDE SEQUENCE [LARGE SCALE GENOMIC DNA]</scope>
    <source>
        <strain>RKS4594</strain>
    </source>
</reference>
<keyword id="KW-0028">Amino-acid biosynthesis</keyword>
<keyword id="KW-0057">Aromatic amino acid biosynthesis</keyword>
<keyword id="KW-0170">Cobalt</keyword>
<keyword id="KW-0963">Cytoplasm</keyword>
<keyword id="KW-0456">Lyase</keyword>
<keyword id="KW-0479">Metal-binding</keyword>
<keyword id="KW-0520">NAD</keyword>
<keyword id="KW-0547">Nucleotide-binding</keyword>
<keyword id="KW-0862">Zinc</keyword>
<name>AROB_SALPC</name>
<dbReference type="EC" id="4.2.3.4" evidence="1"/>
<dbReference type="EMBL" id="CP000857">
    <property type="protein sequence ID" value="ACN47638.1"/>
    <property type="molecule type" value="Genomic_DNA"/>
</dbReference>
<dbReference type="RefSeq" id="WP_000439824.1">
    <property type="nucleotide sequence ID" value="NC_012125.1"/>
</dbReference>
<dbReference type="SMR" id="C0Q0G1"/>
<dbReference type="KEGG" id="sei:SPC_3555"/>
<dbReference type="HOGENOM" id="CLU_001201_0_2_6"/>
<dbReference type="UniPathway" id="UPA00053">
    <property type="reaction ID" value="UER00085"/>
</dbReference>
<dbReference type="Proteomes" id="UP000001599">
    <property type="component" value="Chromosome"/>
</dbReference>
<dbReference type="GO" id="GO:0005737">
    <property type="term" value="C:cytoplasm"/>
    <property type="evidence" value="ECO:0007669"/>
    <property type="project" value="UniProtKB-SubCell"/>
</dbReference>
<dbReference type="GO" id="GO:0003856">
    <property type="term" value="F:3-dehydroquinate synthase activity"/>
    <property type="evidence" value="ECO:0007669"/>
    <property type="project" value="UniProtKB-UniRule"/>
</dbReference>
<dbReference type="GO" id="GO:0046872">
    <property type="term" value="F:metal ion binding"/>
    <property type="evidence" value="ECO:0007669"/>
    <property type="project" value="UniProtKB-KW"/>
</dbReference>
<dbReference type="GO" id="GO:0000166">
    <property type="term" value="F:nucleotide binding"/>
    <property type="evidence" value="ECO:0007669"/>
    <property type="project" value="UniProtKB-KW"/>
</dbReference>
<dbReference type="GO" id="GO:0008652">
    <property type="term" value="P:amino acid biosynthetic process"/>
    <property type="evidence" value="ECO:0007669"/>
    <property type="project" value="UniProtKB-KW"/>
</dbReference>
<dbReference type="GO" id="GO:0009073">
    <property type="term" value="P:aromatic amino acid family biosynthetic process"/>
    <property type="evidence" value="ECO:0007669"/>
    <property type="project" value="UniProtKB-KW"/>
</dbReference>
<dbReference type="GO" id="GO:0009423">
    <property type="term" value="P:chorismate biosynthetic process"/>
    <property type="evidence" value="ECO:0007669"/>
    <property type="project" value="UniProtKB-UniRule"/>
</dbReference>
<dbReference type="CDD" id="cd08195">
    <property type="entry name" value="DHQS"/>
    <property type="match status" value="1"/>
</dbReference>
<dbReference type="FunFam" id="1.20.1090.10:FF:000002">
    <property type="entry name" value="3-dehydroquinate synthase"/>
    <property type="match status" value="1"/>
</dbReference>
<dbReference type="FunFam" id="3.40.50.1970:FF:000001">
    <property type="entry name" value="3-dehydroquinate synthase"/>
    <property type="match status" value="1"/>
</dbReference>
<dbReference type="Gene3D" id="3.40.50.1970">
    <property type="match status" value="1"/>
</dbReference>
<dbReference type="Gene3D" id="1.20.1090.10">
    <property type="entry name" value="Dehydroquinate synthase-like - alpha domain"/>
    <property type="match status" value="1"/>
</dbReference>
<dbReference type="HAMAP" id="MF_00110">
    <property type="entry name" value="DHQ_synthase"/>
    <property type="match status" value="1"/>
</dbReference>
<dbReference type="InterPro" id="IPR050071">
    <property type="entry name" value="Dehydroquinate_synthase"/>
</dbReference>
<dbReference type="InterPro" id="IPR016037">
    <property type="entry name" value="DHQ_synth_AroB"/>
</dbReference>
<dbReference type="InterPro" id="IPR030963">
    <property type="entry name" value="DHQ_synth_fam"/>
</dbReference>
<dbReference type="InterPro" id="IPR030960">
    <property type="entry name" value="DHQS/DOIS_N"/>
</dbReference>
<dbReference type="InterPro" id="IPR056179">
    <property type="entry name" value="DHQS_C"/>
</dbReference>
<dbReference type="NCBIfam" id="TIGR01357">
    <property type="entry name" value="aroB"/>
    <property type="match status" value="1"/>
</dbReference>
<dbReference type="PANTHER" id="PTHR43622">
    <property type="entry name" value="3-DEHYDROQUINATE SYNTHASE"/>
    <property type="match status" value="1"/>
</dbReference>
<dbReference type="PANTHER" id="PTHR43622:SF7">
    <property type="entry name" value="3-DEHYDROQUINATE SYNTHASE, CHLOROPLASTIC"/>
    <property type="match status" value="1"/>
</dbReference>
<dbReference type="Pfam" id="PF01761">
    <property type="entry name" value="DHQ_synthase"/>
    <property type="match status" value="1"/>
</dbReference>
<dbReference type="Pfam" id="PF24621">
    <property type="entry name" value="DHQS_C"/>
    <property type="match status" value="1"/>
</dbReference>
<dbReference type="PIRSF" id="PIRSF001455">
    <property type="entry name" value="DHQ_synth"/>
    <property type="match status" value="1"/>
</dbReference>
<dbReference type="SUPFAM" id="SSF56796">
    <property type="entry name" value="Dehydroquinate synthase-like"/>
    <property type="match status" value="1"/>
</dbReference>
<comment type="function">
    <text evidence="1">Catalyzes the conversion of 3-deoxy-D-arabino-heptulosonate 7-phosphate (DAHP) to dehydroquinate (DHQ).</text>
</comment>
<comment type="catalytic activity">
    <reaction evidence="1">
        <text>7-phospho-2-dehydro-3-deoxy-D-arabino-heptonate = 3-dehydroquinate + phosphate</text>
        <dbReference type="Rhea" id="RHEA:21968"/>
        <dbReference type="ChEBI" id="CHEBI:32364"/>
        <dbReference type="ChEBI" id="CHEBI:43474"/>
        <dbReference type="ChEBI" id="CHEBI:58394"/>
        <dbReference type="EC" id="4.2.3.4"/>
    </reaction>
</comment>
<comment type="cofactor">
    <cofactor evidence="1">
        <name>Co(2+)</name>
        <dbReference type="ChEBI" id="CHEBI:48828"/>
    </cofactor>
    <cofactor evidence="1">
        <name>Zn(2+)</name>
        <dbReference type="ChEBI" id="CHEBI:29105"/>
    </cofactor>
    <text evidence="1">Binds 1 divalent metal cation per subunit. Can use either Co(2+) or Zn(2+).</text>
</comment>
<comment type="cofactor">
    <cofactor evidence="1">
        <name>NAD(+)</name>
        <dbReference type="ChEBI" id="CHEBI:57540"/>
    </cofactor>
</comment>
<comment type="pathway">
    <text evidence="1">Metabolic intermediate biosynthesis; chorismate biosynthesis; chorismate from D-erythrose 4-phosphate and phosphoenolpyruvate: step 2/7.</text>
</comment>
<comment type="subcellular location">
    <subcellularLocation>
        <location evidence="1">Cytoplasm</location>
    </subcellularLocation>
</comment>
<comment type="similarity">
    <text evidence="1">Belongs to the sugar phosphate cyclases superfamily. Dehydroquinate synthase family.</text>
</comment>
<sequence>MERITVTLGERSYPITIAAGLFNEPASFLPLKSGDQVMLVTNETLAPLYLDKVRGVLERAGVNVDSVILPDGEQYKSLTVLDTVFTALLKKPHGRDTTLVALGGGVIGDLTGFAAASYQRGVRFIQVPTTLLSQVDSSVGGKTAVNHPLGKNMIGAFYQPASVVVDLDCLKTLPARELASGLAEVIKYGIILDADFFTWLEGNLDALLRLDGPAMAYCIRRCCELKAEVVAADEREAGLRALLNLGHTFGHAIEAEMGYGNWLHGEAVAAGIVMAARASERLGQFSSADTQRIIALLERAGLPVNGPCEMSAQDYLPHMLRDKKVLAGELRLVLPLAIGKSEVRGGVSHEVVLSAIADCQQA</sequence>
<gene>
    <name evidence="1" type="primary">aroB</name>
    <name type="ordered locus">SPC_3555</name>
</gene>
<feature type="chain" id="PRO_1000119088" description="3-dehydroquinate synthase">
    <location>
        <begin position="1"/>
        <end position="362"/>
    </location>
</feature>
<feature type="binding site" evidence="1">
    <location>
        <begin position="71"/>
        <end position="76"/>
    </location>
    <ligand>
        <name>NAD(+)</name>
        <dbReference type="ChEBI" id="CHEBI:57540"/>
    </ligand>
</feature>
<feature type="binding site" evidence="1">
    <location>
        <begin position="105"/>
        <end position="109"/>
    </location>
    <ligand>
        <name>NAD(+)</name>
        <dbReference type="ChEBI" id="CHEBI:57540"/>
    </ligand>
</feature>
<feature type="binding site" evidence="1">
    <location>
        <begin position="129"/>
        <end position="130"/>
    </location>
    <ligand>
        <name>NAD(+)</name>
        <dbReference type="ChEBI" id="CHEBI:57540"/>
    </ligand>
</feature>
<feature type="binding site" evidence="1">
    <location>
        <position position="142"/>
    </location>
    <ligand>
        <name>NAD(+)</name>
        <dbReference type="ChEBI" id="CHEBI:57540"/>
    </ligand>
</feature>
<feature type="binding site" evidence="1">
    <location>
        <position position="151"/>
    </location>
    <ligand>
        <name>NAD(+)</name>
        <dbReference type="ChEBI" id="CHEBI:57540"/>
    </ligand>
</feature>
<feature type="binding site" evidence="1">
    <location>
        <begin position="169"/>
        <end position="172"/>
    </location>
    <ligand>
        <name>NAD(+)</name>
        <dbReference type="ChEBI" id="CHEBI:57540"/>
    </ligand>
</feature>
<feature type="binding site" evidence="1">
    <location>
        <position position="184"/>
    </location>
    <ligand>
        <name>Zn(2+)</name>
        <dbReference type="ChEBI" id="CHEBI:29105"/>
    </ligand>
</feature>
<feature type="binding site" evidence="1">
    <location>
        <position position="247"/>
    </location>
    <ligand>
        <name>Zn(2+)</name>
        <dbReference type="ChEBI" id="CHEBI:29105"/>
    </ligand>
</feature>
<feature type="binding site" evidence="1">
    <location>
        <position position="264"/>
    </location>
    <ligand>
        <name>Zn(2+)</name>
        <dbReference type="ChEBI" id="CHEBI:29105"/>
    </ligand>
</feature>
<protein>
    <recommendedName>
        <fullName evidence="1">3-dehydroquinate synthase</fullName>
        <shortName evidence="1">DHQS</shortName>
        <ecNumber evidence="1">4.2.3.4</ecNumber>
    </recommendedName>
</protein>